<name>RL24_CHRVO</name>
<gene>
    <name evidence="1" type="primary">rplX</name>
    <name type="ordered locus">CV_4175</name>
</gene>
<accession>Q7NQG3</accession>
<protein>
    <recommendedName>
        <fullName evidence="1">Large ribosomal subunit protein uL24</fullName>
    </recommendedName>
    <alternativeName>
        <fullName evidence="2">50S ribosomal protein L24</fullName>
    </alternativeName>
</protein>
<feature type="chain" id="PRO_0000130645" description="Large ribosomal subunit protein uL24">
    <location>
        <begin position="1"/>
        <end position="104"/>
    </location>
</feature>
<dbReference type="EMBL" id="AE016825">
    <property type="protein sequence ID" value="AAQ61835.1"/>
    <property type="molecule type" value="Genomic_DNA"/>
</dbReference>
<dbReference type="RefSeq" id="WP_011137722.1">
    <property type="nucleotide sequence ID" value="NC_005085.1"/>
</dbReference>
<dbReference type="SMR" id="Q7NQG3"/>
<dbReference type="STRING" id="243365.CV_4175"/>
<dbReference type="GeneID" id="97477826"/>
<dbReference type="KEGG" id="cvi:CV_4175"/>
<dbReference type="eggNOG" id="COG0198">
    <property type="taxonomic scope" value="Bacteria"/>
</dbReference>
<dbReference type="HOGENOM" id="CLU_093315_2_2_4"/>
<dbReference type="OrthoDB" id="9807419at2"/>
<dbReference type="Proteomes" id="UP000001424">
    <property type="component" value="Chromosome"/>
</dbReference>
<dbReference type="GO" id="GO:1990904">
    <property type="term" value="C:ribonucleoprotein complex"/>
    <property type="evidence" value="ECO:0007669"/>
    <property type="project" value="UniProtKB-KW"/>
</dbReference>
<dbReference type="GO" id="GO:0005840">
    <property type="term" value="C:ribosome"/>
    <property type="evidence" value="ECO:0007669"/>
    <property type="project" value="UniProtKB-KW"/>
</dbReference>
<dbReference type="GO" id="GO:0019843">
    <property type="term" value="F:rRNA binding"/>
    <property type="evidence" value="ECO:0007669"/>
    <property type="project" value="UniProtKB-UniRule"/>
</dbReference>
<dbReference type="GO" id="GO:0003735">
    <property type="term" value="F:structural constituent of ribosome"/>
    <property type="evidence" value="ECO:0007669"/>
    <property type="project" value="InterPro"/>
</dbReference>
<dbReference type="GO" id="GO:0006412">
    <property type="term" value="P:translation"/>
    <property type="evidence" value="ECO:0007669"/>
    <property type="project" value="UniProtKB-UniRule"/>
</dbReference>
<dbReference type="CDD" id="cd06089">
    <property type="entry name" value="KOW_RPL26"/>
    <property type="match status" value="1"/>
</dbReference>
<dbReference type="FunFam" id="2.30.30.30:FF:000004">
    <property type="entry name" value="50S ribosomal protein L24"/>
    <property type="match status" value="1"/>
</dbReference>
<dbReference type="Gene3D" id="2.30.30.30">
    <property type="match status" value="1"/>
</dbReference>
<dbReference type="HAMAP" id="MF_01326_B">
    <property type="entry name" value="Ribosomal_uL24_B"/>
    <property type="match status" value="1"/>
</dbReference>
<dbReference type="InterPro" id="IPR005824">
    <property type="entry name" value="KOW"/>
</dbReference>
<dbReference type="InterPro" id="IPR014722">
    <property type="entry name" value="Rib_uL2_dom2"/>
</dbReference>
<dbReference type="InterPro" id="IPR003256">
    <property type="entry name" value="Ribosomal_uL24"/>
</dbReference>
<dbReference type="InterPro" id="IPR005825">
    <property type="entry name" value="Ribosomal_uL24_CS"/>
</dbReference>
<dbReference type="InterPro" id="IPR041988">
    <property type="entry name" value="Ribosomal_uL24_KOW"/>
</dbReference>
<dbReference type="InterPro" id="IPR008991">
    <property type="entry name" value="Translation_prot_SH3-like_sf"/>
</dbReference>
<dbReference type="NCBIfam" id="TIGR01079">
    <property type="entry name" value="rplX_bact"/>
    <property type="match status" value="1"/>
</dbReference>
<dbReference type="PANTHER" id="PTHR12903">
    <property type="entry name" value="MITOCHONDRIAL RIBOSOMAL PROTEIN L24"/>
    <property type="match status" value="1"/>
</dbReference>
<dbReference type="Pfam" id="PF00467">
    <property type="entry name" value="KOW"/>
    <property type="match status" value="1"/>
</dbReference>
<dbReference type="Pfam" id="PF17136">
    <property type="entry name" value="ribosomal_L24"/>
    <property type="match status" value="1"/>
</dbReference>
<dbReference type="SMART" id="SM00739">
    <property type="entry name" value="KOW"/>
    <property type="match status" value="1"/>
</dbReference>
<dbReference type="SUPFAM" id="SSF50104">
    <property type="entry name" value="Translation proteins SH3-like domain"/>
    <property type="match status" value="1"/>
</dbReference>
<dbReference type="PROSITE" id="PS01108">
    <property type="entry name" value="RIBOSOMAL_L24"/>
    <property type="match status" value="1"/>
</dbReference>
<organism>
    <name type="scientific">Chromobacterium violaceum (strain ATCC 12472 / DSM 30191 / JCM 1249 / CCUG 213 / NBRC 12614 / NCIMB 9131 / NCTC 9757 / MK)</name>
    <dbReference type="NCBI Taxonomy" id="243365"/>
    <lineage>
        <taxon>Bacteria</taxon>
        <taxon>Pseudomonadati</taxon>
        <taxon>Pseudomonadota</taxon>
        <taxon>Betaproteobacteria</taxon>
        <taxon>Neisseriales</taxon>
        <taxon>Chromobacteriaceae</taxon>
        <taxon>Chromobacterium</taxon>
    </lineage>
</organism>
<proteinExistence type="inferred from homology"/>
<keyword id="KW-1185">Reference proteome</keyword>
<keyword id="KW-0687">Ribonucleoprotein</keyword>
<keyword id="KW-0689">Ribosomal protein</keyword>
<keyword id="KW-0694">RNA-binding</keyword>
<keyword id="KW-0699">rRNA-binding</keyword>
<sequence length="104" mass="11205">MRKIRKGDEVVVITGKDKGKRGTVLRVLETKLVVEGVNVAKKHQKPNPVRGVAGGIVEKTMPIDASNVAIFNPASQKADRVGFKVLEDGRKVRVFKSSGEVIGA</sequence>
<reference key="1">
    <citation type="journal article" date="2003" name="Proc. Natl. Acad. Sci. U.S.A.">
        <title>The complete genome sequence of Chromobacterium violaceum reveals remarkable and exploitable bacterial adaptability.</title>
        <authorList>
            <person name="Vasconcelos A.T.R."/>
            <person name="de Almeida D.F."/>
            <person name="Hungria M."/>
            <person name="Guimaraes C.T."/>
            <person name="Antonio R.V."/>
            <person name="Almeida F.C."/>
            <person name="de Almeida L.G.P."/>
            <person name="de Almeida R."/>
            <person name="Alves-Gomes J.A."/>
            <person name="Andrade E.M."/>
            <person name="Araripe J."/>
            <person name="de Araujo M.F.F."/>
            <person name="Astolfi-Filho S."/>
            <person name="Azevedo V."/>
            <person name="Baptista A.J."/>
            <person name="Bataus L.A.M."/>
            <person name="Batista J.S."/>
            <person name="Belo A."/>
            <person name="van den Berg C."/>
            <person name="Bogo M."/>
            <person name="Bonatto S."/>
            <person name="Bordignon J."/>
            <person name="Brigido M.M."/>
            <person name="Brito C.A."/>
            <person name="Brocchi M."/>
            <person name="Burity H.A."/>
            <person name="Camargo A.A."/>
            <person name="Cardoso D.D.P."/>
            <person name="Carneiro N.P."/>
            <person name="Carraro D.M."/>
            <person name="Carvalho C.M.B."/>
            <person name="Cascardo J.C.M."/>
            <person name="Cavada B.S."/>
            <person name="Chueire L.M.O."/>
            <person name="Creczynski-Pasa T.B."/>
            <person name="Cunha-Junior N.C."/>
            <person name="Fagundes N."/>
            <person name="Falcao C.L."/>
            <person name="Fantinatti F."/>
            <person name="Farias I.P."/>
            <person name="Felipe M.S.S."/>
            <person name="Ferrari L.P."/>
            <person name="Ferro J.A."/>
            <person name="Ferro M.I.T."/>
            <person name="Franco G.R."/>
            <person name="Freitas N.S.A."/>
            <person name="Furlan L.R."/>
            <person name="Gazzinelli R.T."/>
            <person name="Gomes E.A."/>
            <person name="Goncalves P.R."/>
            <person name="Grangeiro T.B."/>
            <person name="Grattapaglia D."/>
            <person name="Grisard E.C."/>
            <person name="Hanna E.S."/>
            <person name="Jardim S.N."/>
            <person name="Laurino J."/>
            <person name="Leoi L.C.T."/>
            <person name="Lima L.F.A."/>
            <person name="Loureiro M.F."/>
            <person name="Lyra M.C.C.P."/>
            <person name="Madeira H.M.F."/>
            <person name="Manfio G.P."/>
            <person name="Maranhao A.Q."/>
            <person name="Martins W.S."/>
            <person name="di Mauro S.M.Z."/>
            <person name="de Medeiros S.R.B."/>
            <person name="Meissner R.V."/>
            <person name="Moreira M.A.M."/>
            <person name="Nascimento F.F."/>
            <person name="Nicolas M.F."/>
            <person name="Oliveira J.G."/>
            <person name="Oliveira S.C."/>
            <person name="Paixao R.F.C."/>
            <person name="Parente J.A."/>
            <person name="Pedrosa F.O."/>
            <person name="Pena S.D.J."/>
            <person name="Pereira J.O."/>
            <person name="Pereira M."/>
            <person name="Pinto L.S.R.C."/>
            <person name="Pinto L.S."/>
            <person name="Porto J.I.R."/>
            <person name="Potrich D.P."/>
            <person name="Ramalho-Neto C.E."/>
            <person name="Reis A.M.M."/>
            <person name="Rigo L.U."/>
            <person name="Rondinelli E."/>
            <person name="Santos E.B.P."/>
            <person name="Santos F.R."/>
            <person name="Schneider M.P.C."/>
            <person name="Seuanez H.N."/>
            <person name="Silva A.M.R."/>
            <person name="da Silva A.L.C."/>
            <person name="Silva D.W."/>
            <person name="Silva R."/>
            <person name="Simoes I.C."/>
            <person name="Simon D."/>
            <person name="Soares C.M.A."/>
            <person name="Soares R.B.A."/>
            <person name="Souza E.M."/>
            <person name="Souza K.R.L."/>
            <person name="Souza R.C."/>
            <person name="Steffens M.B.R."/>
            <person name="Steindel M."/>
            <person name="Teixeira S.R."/>
            <person name="Urmenyi T."/>
            <person name="Vettore A."/>
            <person name="Wassem R."/>
            <person name="Zaha A."/>
            <person name="Simpson A.J.G."/>
        </authorList>
    </citation>
    <scope>NUCLEOTIDE SEQUENCE [LARGE SCALE GENOMIC DNA]</scope>
    <source>
        <strain>ATCC 12472 / DSM 30191 / JCM 1249 / CCUG 213 / NBRC 12614 / NCIMB 9131 / NCTC 9757 / MK</strain>
    </source>
</reference>
<evidence type="ECO:0000255" key="1">
    <source>
        <dbReference type="HAMAP-Rule" id="MF_01326"/>
    </source>
</evidence>
<evidence type="ECO:0000305" key="2"/>
<comment type="function">
    <text evidence="1">One of two assembly initiator proteins, it binds directly to the 5'-end of the 23S rRNA, where it nucleates assembly of the 50S subunit.</text>
</comment>
<comment type="function">
    <text evidence="1">One of the proteins that surrounds the polypeptide exit tunnel on the outside of the subunit.</text>
</comment>
<comment type="subunit">
    <text evidence="1">Part of the 50S ribosomal subunit.</text>
</comment>
<comment type="similarity">
    <text evidence="1">Belongs to the universal ribosomal protein uL24 family.</text>
</comment>